<comment type="function">
    <text evidence="7 8 9 10">During ventral cord development, required for axon fasciculation and navigation, mediating both pioneer and follower axon extension, guidance and track formation (PubMed:20876647, PubMed:22442082, PubMed:23376536, PubMed:28846083). Acts in CEPsh glia and SubL neurons to guide follower axons into the nerve ring (PubMed:28846083). Promotes motorneuron development by positively regulating the extension of the anterior neurite of ventral D-type GABAergic motorneurons along the anterior-posterior axis of the ventral nerve cord (PubMed:23376536). Plays a role in synaptogenesis by regulating synaptic vesicle accumulation at GABAergic and cholinergic neuromuscular junctions (PubMed:22442082).</text>
</comment>
<comment type="subcellular location">
    <subcellularLocation>
        <location evidence="11">Cell membrane</location>
        <topology evidence="1">Multi-pass membrane protein</topology>
    </subcellularLocation>
    <subcellularLocation>
        <location evidence="7">Cell projection</location>
        <location evidence="7">Axon</location>
    </subcellularLocation>
    <subcellularLocation>
        <location evidence="7">Cell projection</location>
        <location evidence="7">Dendrite</location>
    </subcellularLocation>
    <text evidence="7">In embryos, localizes to axons in the nerve ring, the tail and along dendrites of sensory neurons.</text>
</comment>
<comment type="alternative products">
    <event type="alternative splicing"/>
    <isoform>
        <id>G5EDK5-1</id>
        <name evidence="14">a</name>
        <sequence type="displayed"/>
    </isoform>
    <isoform>
        <id>G5EDK5-2</id>
        <name evidence="15">b</name>
        <sequence type="described" ref="VSP_060646"/>
    </isoform>
    <isoform>
        <id>G5EDK5-3</id>
        <name evidence="16">c</name>
        <sequence type="described" ref="VSP_060645"/>
    </isoform>
</comment>
<comment type="tissue specificity">
    <text evidence="7 8">Expressed in a region of neuropil around the nerve ring and the ventral cord (at protein level) (PubMed:22442082). Expressed in the head, tail, ventral cord, nerve ring and neurons including HSN neurons (PubMed:20876647). Expressed in DA, VA, and VB and weakly in the DB cholinergic neurons (PubMed:22442082). Not expressed in ventral D-type GABAergic motorneurons (PubMed:22442082).</text>
</comment>
<comment type="developmental stage">
    <text evidence="7 8 9 10">Expressed throughout development (PubMed:20876647). In embryos, first expressed in neuronal precursor cells during gastrulation (PubMed:20876647). At the comma and 1.5-fold embryonic stage, expressed in neurons in the head, the tail and along the ventral cord (PubMed:20876647). In 1.5-fold stage embryos, expressed in the nerve ring bundle (PubMed:28846083). At the L1 larval stage, expressed in the ventral nerve cord and in a subset of dorsal D-type GABAergic motorneurons (PubMed:22442082, PubMed:23376536). At the L2 larval stage, expressed along the ventral nerve cord (PubMed:23376536). Not expressed in ventral D-type GABAergic motorneurons at the L2 larval stage (PubMed:23376536).</text>
</comment>
<comment type="similarity">
    <text evidence="11">Belongs to the G-protein coupled receptor 2 family. LN-TM7 subfamily.</text>
</comment>
<keyword id="KW-0025">Alternative splicing</keyword>
<keyword id="KW-0106">Calcium</keyword>
<keyword id="KW-1003">Cell membrane</keyword>
<keyword id="KW-0966">Cell projection</keyword>
<keyword id="KW-1015">Disulfide bond</keyword>
<keyword id="KW-0245">EGF-like domain</keyword>
<keyword id="KW-0325">Glycoprotein</keyword>
<keyword id="KW-0472">Membrane</keyword>
<keyword id="KW-0524">Neurogenesis</keyword>
<keyword id="KW-1185">Reference proteome</keyword>
<keyword id="KW-0677">Repeat</keyword>
<keyword id="KW-0732">Signal</keyword>
<keyword id="KW-0812">Transmembrane</keyword>
<keyword id="KW-1133">Transmembrane helix</keyword>
<organism evidence="13">
    <name type="scientific">Caenorhabditis elegans</name>
    <dbReference type="NCBI Taxonomy" id="6239"/>
    <lineage>
        <taxon>Eukaryota</taxon>
        <taxon>Metazoa</taxon>
        <taxon>Ecdysozoa</taxon>
        <taxon>Nematoda</taxon>
        <taxon>Chromadorea</taxon>
        <taxon>Rhabditida</taxon>
        <taxon>Rhabditina</taxon>
        <taxon>Rhabditomorpha</taxon>
        <taxon>Rhabditoidea</taxon>
        <taxon>Rhabditidae</taxon>
        <taxon>Peloderinae</taxon>
        <taxon>Caenorhabditis</taxon>
    </lineage>
</organism>
<name>CELR_CAEEL</name>
<sequence length="2596" mass="288351">MMLDRIMFLLFFILSLVIGSFSEYLDDKYYSTNSIDVVCKPCAVPSSNSVIWLPASRPPCLHPGQPIIHWPDLSDNLACPVPGLPDSVHSSQISLLEGEGLLLTKERICFFDGPIDFHYDYVCDGKLYRSKMRIGHSIASKKKLETRRTKRWARRRNPDANAVHFQQEKYVKELPEDTPIETIIASVKASHASSQPLYYSMVAPQDSRSQNLFTLDTMSGEIRLAKSMDREVLDKHILKVTAYERVDPTISASTTVVVHVLDVQDNSPIFEKDSYFGEIREDAPIGTTVLSVFARDLDSGENGEIEYSLGEGNGKNLLAINAKSGVIQTAAPLDRETLSLIRLDVIASDKGTPKRESTAMVEITVVDVNDNAPVFASDSYNVTILENITIPAVIATVKATDEDFGTNGKVHYSMASSSGIGGLTIDYSTGEVTLRERIDAKNSPITAVIRAKDGAQPALSSTVPLTINVIDINDHAPTLIAAQKMITLEENVAIGEEVGRVYAIDEDSGPNGIIKYSMEGSEDFIIDEDSGLIKTTKLLDRETTARYSLKVTARDMGTPSLNTSTTIAVVLKDINDNAPTFDKKEYNVTISEEMPRGSQIITLKAVDNDEDQKITYRIEEADREVFSILDIGDQGAILSVSGELKRQDHKVRVEISATDQGGLQGRCVVNVFIDDVNSAPYFNDHPFSVKIPEHSPIGYPVITLKAEDHDRGDNARIVYSIDSSQFFRIDPSSGDISVSSDLDREDRATFSVIVTASDHASPPLNTSTQIEVILDDINDNSPQFTSSSYAATISEDIPVGTSFLQVSAIDADIGPNGIVDYFLNESSSSPSIQLFRLDRTSGTLRVSSKLDREQFAVIVLPIFARDRGTPSLSAASEITLTLSDVNDNAPTFEQLSYDLYIAENSPVGSTVGTIVARDADEGDNADISFRIFGGADAKLFDIEEDAEQNGVVRILTRAEFDYEAKANKFFFELQASSGQLSSTVPVRIHVSDVNDNKPALKDFVILMNRFDNVQMARQIGFIPAFDPDQNATLEYFLEENDLIEAEKYTGKILVKQEWKRNMDVSFKTCVSDGANTECSTCRFIHVLVEPEWLSESFTLSLARMTVDDFWDPLVFQRFRDAMSTLSNWKPSDIHVIGVKQHLDDVIYINIAITDHGRVVRGWRAIELVKESIKKLEKMTLLQVEVIRDESCANEPCSHMAKCRQTQKFVGEMKAHETDNFIARTLNTVNTFVCECPSGFTSSGAHGDCDTRIDECYRGRCSNNSTCVAFENTYQCECKPGWIGRHCEISVHALTCVPGYCMSDSLCELDGNQMKCRHCKYHGEDTDERCRLRSVSFDGEGLLNVNLDLPRTQWTMKFRVSTIAHNGVLVFTGDKRSDFVEVSVVDRVLKVQFSLGGEKIDAKMENDVENRINDGEWHTVALEYSNKQITMSLDDCETNPSLLLNTSPNCAIRAKLNLEKKCEDPTVPCYRYLDISNGLFLGGRPGTSKQIEKAFSGCISDLSVDKEDVDFSTIKEMHKVGQVHEGCKHRKDFCSTSDGQCSATSKCVNRWGGRICSCPQSVHSTGECVGALGTQDLRGHSLFEEESFVLYQPSQVSVPFEVSFEFRTSRADMQVFALEFTQRSVHYNLEVDDGTLKYNIGDSEVELPAPEVTSKHWMNVVIKFEADSVATSINGIYSAEAKASISDMNLESLYFGIAPGTGHPSRFEGCIRNVLVDGRSISVKKKGKTRAGCVVPNRCSVDSICPAESTCHRAWNKHKCKCHKSFVGDTCLPVCSVANVCSSGTCVSSNTTAGYECICPAGKTGKNCQLEAPKQMCPSGWWGTFPRCRRCSCAQTKDYEAQCDKKTGACQCKKSHFSTINGCVKCECGFGADSTECSADGHCKCNGDAVGRRCDRCSRFDHQLDSKTLKCRPVSGKCPSEIEYSIQWPASQKGSIVRQSCPVGESGLATRKCLETGRWSDVNAWNCTRPEYSIMVNKFEILEPSKLLTMVANATNTESSIRGRNQQIAAEALSRLVDYEQSMPMKGRAHIKDMKFTEKLIESLGRVMSEQPADEYSTLISKLWNYAETVAEIHENVNFLSPFFVANDHIVFASDKLDFGNILPKFNNFVDLRPTGFPRVRAIVTGTTQVVYSIVPYPRCNRCENPMIAIVANTSDPVIVEFEIEEDDGWKYPECVRFDEKSGTWTARGAALIGLNLTHAACEYNRIGVFTMFVNDQSSSIVRVAQMDNMTSPAIAGVALFLCFLSILLTLSRRSLKTHSVRIGFILFFAINILNLFFVHKTAINQAYCPVRNAMLSFTSSAPFAWLFLYGLYIYRMLADGSSSPSLTTSLLVGIVFPCLISFTTFFVTDQCSLSPHLWLFWCIILPIGLFLLLSFYAAATSVLVSLHKKYDVFVAKYNVKRAVFQHFILTIFTLGMTLTGLFANQLPLPMEIMEISQSIIYLIAALVIFLWCVCDITTKASDSNPSMWLDNQKSVMAESTMADPQCASPLLSPRHQHHEVPMDSEWVPDVNPSNHYHTSINEPDTPRRLLLPQNRDVINILSSPDQILNEGVGHVYRNNMGSLPRLRSAQDEADDAYYTYTASRKYKNTTSTFNRE</sequence>
<accession>G5EDK5</accession>
<accession>A0A0K3ARX2</accession>
<accession>A0A0K3AUS4</accession>
<reference evidence="12" key="1">
    <citation type="submission" date="2003-09" db="EMBL/GenBank/DDBJ databases">
        <title>Molecular and Evolutionary Characterization of family B G-protein coupled receptors in Caenorhabditis elegans.</title>
        <authorList>
            <person name="Mastwal S.S."/>
            <person name="Yu D."/>
            <person name="Hedgecock E.M."/>
        </authorList>
    </citation>
    <scope>NUCLEOTIDE SEQUENCE [MRNA]</scope>
</reference>
<reference evidence="13" key="2">
    <citation type="journal article" date="1998" name="Science">
        <title>Genome sequence of the nematode C. elegans: a platform for investigating biology.</title>
        <authorList>
            <consortium name="The C. elegans sequencing consortium"/>
        </authorList>
    </citation>
    <scope>NUCLEOTIDE SEQUENCE [LARGE SCALE GENOMIC DNA]</scope>
    <source>
        <strain evidence="13">Bristol N2</strain>
    </source>
</reference>
<reference evidence="11" key="3">
    <citation type="journal article" date="2010" name="Development">
        <title>The Flamingo ortholog FMI-1 controls pioneer-dependent navigation of follower axons in C. elegans.</title>
        <authorList>
            <person name="Steimel A."/>
            <person name="Wong L."/>
            <person name="Najarro E.H."/>
            <person name="Ackley B.D."/>
            <person name="Garriga G."/>
            <person name="Hutter H."/>
        </authorList>
    </citation>
    <scope>FUNCTION</scope>
    <scope>SUBCELLULAR LOCATION</scope>
    <scope>TISSUE SPECIFICITY</scope>
    <scope>DEVELOPMENTAL STAGE</scope>
    <scope>MUTAGENESIS OF 725-GLN--GLU-2596; GLY-842; GLY-1481 AND 2184-TRP--GLU-2596</scope>
</reference>
<reference evidence="11" key="4">
    <citation type="journal article" date="2012" name="J. Neurosci.">
        <title>Caenorhabditis elegans flamingo cadherin fmi-1 regulates GABAergic neuronal development.</title>
        <authorList>
            <person name="Najarro E.H."/>
            <person name="Wong L."/>
            <person name="Zhen M."/>
            <person name="Carpio E.P."/>
            <person name="Goncharov A."/>
            <person name="Garriga G."/>
            <person name="Lundquist E.A."/>
            <person name="Jin Y."/>
            <person name="Ackley B.D."/>
        </authorList>
    </citation>
    <scope>FUNCTION</scope>
    <scope>TISSUE SPECIFICITY</scope>
    <scope>DEVELOPMENTAL STAGE</scope>
    <scope>MUTAGENESIS OF 725-GLN--GLU-2596; GLY-842; GLY-1481 AND 2150-VAL--GLU-2596</scope>
</reference>
<reference evidence="11" key="5">
    <citation type="journal article" date="2013" name="Dev. Biol.">
        <title>C. elegans fmi-1/flamingo and Wnt pathway components interact genetically to control the anteroposterior neurite growth of the VD GABAergic neurons.</title>
        <authorList>
            <person name="Huarcaya Najarro E."/>
            <person name="Ackley B.D."/>
        </authorList>
    </citation>
    <scope>FUNCTION</scope>
    <scope>DEVELOPMENTAL STAGE</scope>
    <scope>MUTAGENESIS OF 725-GLN--GLU-2596</scope>
</reference>
<reference evidence="11" key="6">
    <citation type="journal article" date="2017" name="Nat. Neurosci.">
        <title>Glia initiate brain assembly through noncanonical Chimaerin-Furin axon guidance in C. elegans.</title>
        <authorList>
            <person name="Rapti G."/>
            <person name="Li C."/>
            <person name="Shan A."/>
            <person name="Lu Y."/>
            <person name="Shaham S."/>
        </authorList>
    </citation>
    <scope>FUNCTION</scope>
    <scope>DEVELOPMENTAL STAGE</scope>
    <scope>MUTAGENESIS OF 725-GLN--GLU-2596</scope>
</reference>
<evidence type="ECO:0000255" key="1"/>
<evidence type="ECO:0000255" key="2">
    <source>
        <dbReference type="PROSITE-ProRule" id="PRU00043"/>
    </source>
</evidence>
<evidence type="ECO:0000255" key="3">
    <source>
        <dbReference type="PROSITE-ProRule" id="PRU00076"/>
    </source>
</evidence>
<evidence type="ECO:0000255" key="4">
    <source>
        <dbReference type="PROSITE-ProRule" id="PRU00098"/>
    </source>
</evidence>
<evidence type="ECO:0000255" key="5">
    <source>
        <dbReference type="PROSITE-ProRule" id="PRU00122"/>
    </source>
</evidence>
<evidence type="ECO:0000255" key="6">
    <source>
        <dbReference type="PROSITE-ProRule" id="PRU00498"/>
    </source>
</evidence>
<evidence type="ECO:0000269" key="7">
    <source>
    </source>
</evidence>
<evidence type="ECO:0000269" key="8">
    <source>
    </source>
</evidence>
<evidence type="ECO:0000269" key="9">
    <source>
    </source>
</evidence>
<evidence type="ECO:0000269" key="10">
    <source>
    </source>
</evidence>
<evidence type="ECO:0000305" key="11"/>
<evidence type="ECO:0000312" key="12">
    <source>
        <dbReference type="EMBL" id="AAQ84880.1"/>
    </source>
</evidence>
<evidence type="ECO:0000312" key="13">
    <source>
        <dbReference type="Proteomes" id="UP000001940"/>
    </source>
</evidence>
<evidence type="ECO:0000312" key="14">
    <source>
        <dbReference type="WormBase" id="F15B9.7a"/>
    </source>
</evidence>
<evidence type="ECO:0000312" key="15">
    <source>
        <dbReference type="WormBase" id="F15B9.7b"/>
    </source>
</evidence>
<evidence type="ECO:0000312" key="16">
    <source>
        <dbReference type="WormBase" id="F15B9.7c"/>
    </source>
</evidence>
<protein>
    <recommendedName>
        <fullName evidence="11">Cadherin EGF LAG seven-pass G-type receptor fmi-1</fullName>
    </recommendedName>
    <alternativeName>
        <fullName evidence="11">Protein flamingo homolog</fullName>
    </alternativeName>
</protein>
<proteinExistence type="evidence at protein level"/>
<gene>
    <name evidence="14" type="primary">fmi-1</name>
    <name evidence="14" type="ORF">F15B9.7</name>
</gene>
<feature type="signal peptide" evidence="1">
    <location>
        <begin position="1"/>
        <end position="22"/>
    </location>
</feature>
<feature type="chain" id="PRO_5015091945" description="Cadherin EGF LAG seven-pass G-type receptor fmi-1">
    <location>
        <begin position="23"/>
        <end position="2596"/>
    </location>
</feature>
<feature type="topological domain" description="Extracellular" evidence="11">
    <location>
        <begin position="23"/>
        <end position="2229"/>
    </location>
</feature>
<feature type="transmembrane region" description="Helical; Name=1" evidence="1">
    <location>
        <begin position="2230"/>
        <end position="2250"/>
    </location>
</feature>
<feature type="topological domain" description="Cytoplasmic" evidence="11">
    <location>
        <begin position="2251"/>
        <end position="2261"/>
    </location>
</feature>
<feature type="transmembrane region" description="Helical; Name=2" evidence="1">
    <location>
        <begin position="2262"/>
        <end position="2282"/>
    </location>
</feature>
<feature type="topological domain" description="Extracellular" evidence="11">
    <location>
        <begin position="2283"/>
        <end position="2292"/>
    </location>
</feature>
<feature type="transmembrane region" description="Helical; Name=3" evidence="1">
    <location>
        <begin position="2293"/>
        <end position="2313"/>
    </location>
</feature>
<feature type="topological domain" description="Cytoplasmic" evidence="11">
    <location>
        <begin position="2314"/>
        <end position="2326"/>
    </location>
</feature>
<feature type="transmembrane region" description="Helical; Name=4" evidence="1">
    <location>
        <begin position="2327"/>
        <end position="2347"/>
    </location>
</feature>
<feature type="topological domain" description="Extracellular" evidence="11">
    <location>
        <begin position="2348"/>
        <end position="2356"/>
    </location>
</feature>
<feature type="transmembrane region" description="Helical; Name=5" evidence="1">
    <location>
        <begin position="2357"/>
        <end position="2377"/>
    </location>
</feature>
<feature type="topological domain" description="Cytoplasmic" evidence="11">
    <location>
        <begin position="2378"/>
        <end position="2401"/>
    </location>
</feature>
<feature type="transmembrane region" description="Helical; Name=6" evidence="1">
    <location>
        <begin position="2402"/>
        <end position="2422"/>
    </location>
</feature>
<feature type="topological domain" description="Extracellular" evidence="11">
    <location>
        <begin position="2423"/>
        <end position="2437"/>
    </location>
</feature>
<feature type="transmembrane region" description="Helical; Name=7" evidence="1">
    <location>
        <begin position="2438"/>
        <end position="2458"/>
    </location>
</feature>
<feature type="topological domain" description="Cytoplasmic" evidence="11">
    <location>
        <begin position="2459"/>
        <end position="2596"/>
    </location>
</feature>
<feature type="domain" description="Cadherin 1" evidence="2">
    <location>
        <begin position="166"/>
        <end position="270"/>
    </location>
</feature>
<feature type="domain" description="Cadherin 2" evidence="2">
    <location>
        <begin position="271"/>
        <end position="375"/>
    </location>
</feature>
<feature type="domain" description="Cadherin 3" evidence="2">
    <location>
        <begin position="376"/>
        <end position="479"/>
    </location>
</feature>
<feature type="domain" description="Cadherin 4" evidence="2">
    <location>
        <begin position="480"/>
        <end position="581"/>
    </location>
</feature>
<feature type="domain" description="Cadherin 5" evidence="2">
    <location>
        <begin position="582"/>
        <end position="682"/>
    </location>
</feature>
<feature type="domain" description="Cadherin 6" evidence="2">
    <location>
        <begin position="683"/>
        <end position="784"/>
    </location>
</feature>
<feature type="domain" description="Cadherin 7" evidence="2">
    <location>
        <begin position="785"/>
        <end position="892"/>
    </location>
</feature>
<feature type="domain" description="Cadherin 8" evidence="2">
    <location>
        <begin position="893"/>
        <end position="1000"/>
    </location>
</feature>
<feature type="domain" description="EGF-like 1" evidence="3">
    <location>
        <begin position="1251"/>
        <end position="1287"/>
    </location>
</feature>
<feature type="domain" description="Laminin G-like 1" evidence="5">
    <location>
        <begin position="1333"/>
        <end position="1526"/>
    </location>
</feature>
<feature type="domain" description="EGF-like 2" evidence="3">
    <location>
        <begin position="1529"/>
        <end position="1568"/>
    </location>
</feature>
<feature type="domain" description="Laminin G-like 2" evidence="5">
    <location>
        <begin position="1577"/>
        <end position="1732"/>
    </location>
</feature>
<feature type="domain" description="EGF-like 3" evidence="3">
    <location>
        <begin position="1734"/>
        <end position="1771"/>
    </location>
</feature>
<feature type="domain" description="EGF-like 4" evidence="3">
    <location>
        <begin position="1776"/>
        <end position="1808"/>
    </location>
</feature>
<feature type="domain" description="GAIN-B" evidence="4">
    <location>
        <begin position="2054"/>
        <end position="2219"/>
    </location>
</feature>
<feature type="region of interest" description="GPS" evidence="4">
    <location>
        <begin position="2174"/>
        <end position="2219"/>
    </location>
</feature>
<feature type="glycosylation site" description="N-linked (GlcNAc...) asparagine" evidence="6">
    <location>
        <position position="381"/>
    </location>
</feature>
<feature type="glycosylation site" description="N-linked (GlcNAc...) asparagine" evidence="6">
    <location>
        <position position="387"/>
    </location>
</feature>
<feature type="glycosylation site" description="N-linked (GlcNAc...) asparagine" evidence="6">
    <location>
        <position position="562"/>
    </location>
</feature>
<feature type="glycosylation site" description="N-linked (GlcNAc...) asparagine" evidence="6">
    <location>
        <position position="587"/>
    </location>
</feature>
<feature type="glycosylation site" description="N-linked (GlcNAc...) asparagine" evidence="6">
    <location>
        <position position="765"/>
    </location>
</feature>
<feature type="glycosylation site" description="N-linked (GlcNAc...) asparagine" evidence="6">
    <location>
        <position position="824"/>
    </location>
</feature>
<feature type="glycosylation site" description="N-linked (GlcNAc...) asparagine" evidence="6">
    <location>
        <position position="1030"/>
    </location>
</feature>
<feature type="glycosylation site" description="N-linked (GlcNAc...) asparagine" evidence="6">
    <location>
        <position position="1263"/>
    </location>
</feature>
<feature type="glycosylation site" description="N-linked (GlcNAc...) asparagine" evidence="6">
    <location>
        <position position="1789"/>
    </location>
</feature>
<feature type="glycosylation site" description="N-linked (GlcNAc...) asparagine" evidence="6">
    <location>
        <position position="1965"/>
    </location>
</feature>
<feature type="glycosylation site" description="N-linked (GlcNAc...) asparagine" evidence="6">
    <location>
        <position position="1992"/>
    </location>
</feature>
<feature type="glycosylation site" description="N-linked (GlcNAc...) asparagine" evidence="6">
    <location>
        <position position="2152"/>
    </location>
</feature>
<feature type="glycosylation site" description="N-linked (GlcNAc...) asparagine" evidence="6">
    <location>
        <position position="2195"/>
    </location>
</feature>
<feature type="glycosylation site" description="N-linked (GlcNAc...) asparagine" evidence="6">
    <location>
        <position position="2228"/>
    </location>
</feature>
<feature type="disulfide bond" evidence="3">
    <location>
        <begin position="1255"/>
        <end position="1266"/>
    </location>
</feature>
<feature type="disulfide bond" evidence="3">
    <location>
        <begin position="1260"/>
        <end position="1275"/>
    </location>
</feature>
<feature type="disulfide bond" evidence="3">
    <location>
        <begin position="1277"/>
        <end position="1286"/>
    </location>
</feature>
<feature type="disulfide bond" evidence="5">
    <location>
        <begin position="1497"/>
        <end position="1526"/>
    </location>
</feature>
<feature type="disulfide bond" evidence="3">
    <location>
        <begin position="1533"/>
        <end position="1546"/>
    </location>
</feature>
<feature type="disulfide bond" evidence="3">
    <location>
        <begin position="1540"/>
        <end position="1555"/>
    </location>
</feature>
<feature type="disulfide bond" evidence="3">
    <location>
        <begin position="1557"/>
        <end position="1567"/>
    </location>
</feature>
<feature type="disulfide bond" evidence="5">
    <location>
        <begin position="1709"/>
        <end position="1732"/>
    </location>
</feature>
<feature type="disulfide bond" evidence="3">
    <location>
        <begin position="1738"/>
        <end position="1750"/>
    </location>
</feature>
<feature type="disulfide bond" evidence="3">
    <location>
        <begin position="1744"/>
        <end position="1759"/>
    </location>
</feature>
<feature type="disulfide bond" evidence="3">
    <location>
        <begin position="1761"/>
        <end position="1770"/>
    </location>
</feature>
<feature type="disulfide bond" evidence="3">
    <location>
        <begin position="1780"/>
        <end position="1785"/>
    </location>
</feature>
<feature type="disulfide bond" evidence="3">
    <location>
        <begin position="1798"/>
        <end position="1807"/>
    </location>
</feature>
<feature type="disulfide bond" evidence="4">
    <location>
        <begin position="2174"/>
        <end position="2201"/>
    </location>
</feature>
<feature type="splice variant" id="VSP_060645" description="In isoform c." evidence="11">
    <location>
        <begin position="1"/>
        <end position="1014"/>
    </location>
</feature>
<feature type="splice variant" id="VSP_060646" description="In isoform b." evidence="11">
    <location>
        <begin position="1"/>
        <end position="359"/>
    </location>
</feature>
<feature type="mutagenesis site" description="In rh308; synaptic defects. Axon guidance defects. In 81% of animals, the PVPR axon irregularly crosses the ventral midline and joins the right axon track. PVQ axons irregularly cross the ventral midline multiple times and often stop prematurely before reaching the nerve ring. In the majority of animals, HSN axon guidance is disrupted along the ventral nerve cord (VNC) axon tracks where HSN axons circle the vulva and HSN axons often project to the posterior instead of the anterior side after leaving the vulva region. HSN axons also often cross the ventral midline outside the vulva region and the HSN axons that extended along the VNC often stop before reaching the nerve ring. Dorsal D-type and ventral D-type GABAergic motorneurons erroneously guided axons into the left VNC axon track. Guidance of the commissures of the dorsal D-type and ventral D-type GABAergic and the cholinergic DA/DB motoneurons were partially disrupted. Irregular midline crossing of command interneuron axons. Defects in neurite positioning along the anterior posterior axis with ventral D-type GABAergic neurons displaying posterior neurites, instead of anterior neurites, which results in ventrodorsal commissures positioned on the posterior side of their cell body. Defective guidance of the AIY axon into the nerve ring, which impairs nerve ring assembly." evidence="7 8 9 10">
    <location>
        <begin position="725"/>
        <end position="2596"/>
    </location>
</feature>
<feature type="mutagenesis site" description="In gm188; synaptic defects. HSN axon guidance defects. Does not display PVP axon guidance defects." evidence="7 8">
    <original>G</original>
    <variation>R</variation>
    <location>
        <position position="842"/>
    </location>
</feature>
<feature type="mutagenesis site" description="In ju43; synaptic defects caused by disrupted neuromuscular junction formation whereby aberrantly shaped and enlarged snb-1-positive synaptic vesicles abnormally cluster at GABAergic and cholinergic neuromuscular junctions. Defective snb-1-positive vesicle clustering is more severe at GABAergic neuromuscular junctions. PVP and HSN axon guidance defects. Does not display PVQ axon guidance defects." evidence="7 8">
    <original>G</original>
    <variation>E</variation>
    <location>
        <position position="1481"/>
    </location>
</feature>
<feature type="mutagenesis site" description="In ju58; synaptic defects caused by disrupted neuromuscular junction formation whereby aberrantly shaped and enlarged snb-1-positive synaptic vesicles abnormally cluster at dorsal D-type and ventral D-type GABAergic and cholinergic neuromuscular junctions. Defective snb-1-positive vesicle clustering is more severe at GABAergic neuromuscular junctions. Incomplete axon extension of dorsal D-type GABAergic motorneurons. GABAergic motorneurons exit the ventral cord on the incorrect side and have defects in axon extension." evidence="8">
    <location>
        <begin position="2150"/>
        <end position="2596"/>
    </location>
</feature>
<feature type="mutagenesis site" description="In hd121; axon guidance defects." evidence="7">
    <location>
        <begin position="2184"/>
        <end position="2596"/>
    </location>
</feature>
<dbReference type="EMBL" id="AY314773">
    <property type="protein sequence ID" value="AAQ84880.1"/>
    <property type="molecule type" value="mRNA"/>
</dbReference>
<dbReference type="EMBL" id="BX284605">
    <property type="protein sequence ID" value="CAB01427.3"/>
    <property type="molecule type" value="Genomic_DNA"/>
</dbReference>
<dbReference type="EMBL" id="BX284605">
    <property type="protein sequence ID" value="CTQ86770.1"/>
    <property type="molecule type" value="Genomic_DNA"/>
</dbReference>
<dbReference type="EMBL" id="BX284605">
    <property type="protein sequence ID" value="CTQ86771.1"/>
    <property type="molecule type" value="Genomic_DNA"/>
</dbReference>
<dbReference type="RefSeq" id="NP_001300071.1">
    <molecule id="G5EDK5-2"/>
    <property type="nucleotide sequence ID" value="NM_001313142.3"/>
</dbReference>
<dbReference type="RefSeq" id="NP_001300072.1">
    <molecule id="G5EDK5-3"/>
    <property type="nucleotide sequence ID" value="NM_001313143.3"/>
</dbReference>
<dbReference type="RefSeq" id="NP_506256.3">
    <molecule id="G5EDK5-1"/>
    <property type="nucleotide sequence ID" value="NM_073855.6"/>
</dbReference>
<dbReference type="SMR" id="G5EDK5"/>
<dbReference type="FunCoup" id="G5EDK5">
    <property type="interactions" value="690"/>
</dbReference>
<dbReference type="IntAct" id="G5EDK5">
    <property type="interactions" value="1"/>
</dbReference>
<dbReference type="STRING" id="6239.F15B9.7a.1"/>
<dbReference type="GlyCosmos" id="G5EDK5">
    <property type="glycosylation" value="14 sites, No reported glycans"/>
</dbReference>
<dbReference type="PaxDb" id="6239-F15B9.7"/>
<dbReference type="PeptideAtlas" id="G5EDK5"/>
<dbReference type="EnsemblMetazoa" id="F15B9.7a.1">
    <molecule id="G5EDK5-1"/>
    <property type="protein sequence ID" value="F15B9.7a.1"/>
    <property type="gene ID" value="WBGene00001475"/>
</dbReference>
<dbReference type="EnsemblMetazoa" id="F15B9.7b.1">
    <molecule id="G5EDK5-2"/>
    <property type="protein sequence ID" value="F15B9.7b.1"/>
    <property type="gene ID" value="WBGene00001475"/>
</dbReference>
<dbReference type="EnsemblMetazoa" id="F15B9.7c.1">
    <molecule id="G5EDK5-3"/>
    <property type="protein sequence ID" value="F15B9.7c.1"/>
    <property type="gene ID" value="WBGene00001475"/>
</dbReference>
<dbReference type="GeneID" id="179788"/>
<dbReference type="KEGG" id="cel:CELE_F15B9.7"/>
<dbReference type="AGR" id="WB:WBGene00001475"/>
<dbReference type="CTD" id="179788"/>
<dbReference type="WormBase" id="F15B9.7a">
    <molecule id="G5EDK5-1"/>
    <property type="protein sequence ID" value="CE42459"/>
    <property type="gene ID" value="WBGene00001475"/>
    <property type="gene designation" value="fmi-1"/>
</dbReference>
<dbReference type="WormBase" id="F15B9.7b">
    <molecule id="G5EDK5-2"/>
    <property type="protein sequence ID" value="CE50507"/>
    <property type="gene ID" value="WBGene00001475"/>
    <property type="gene designation" value="fmi-1"/>
</dbReference>
<dbReference type="WormBase" id="F15B9.7c">
    <molecule id="G5EDK5-3"/>
    <property type="protein sequence ID" value="CE50392"/>
    <property type="gene ID" value="WBGene00001475"/>
    <property type="gene designation" value="fmi-1"/>
</dbReference>
<dbReference type="eggNOG" id="KOG4289">
    <property type="taxonomic scope" value="Eukaryota"/>
</dbReference>
<dbReference type="GeneTree" id="ENSGT00940000168029"/>
<dbReference type="HOGENOM" id="CLU_231552_0_0_1"/>
<dbReference type="InParanoid" id="G5EDK5"/>
<dbReference type="OMA" id="DAYYTYT"/>
<dbReference type="OrthoDB" id="26203at2759"/>
<dbReference type="PhylomeDB" id="G5EDK5"/>
<dbReference type="SignaLink" id="G5EDK5"/>
<dbReference type="PRO" id="PR:G5EDK5"/>
<dbReference type="Proteomes" id="UP000001940">
    <property type="component" value="Chromosome V"/>
</dbReference>
<dbReference type="Bgee" id="WBGene00001475">
    <property type="expression patterns" value="Expressed in pharyngeal muscle cell (C elegans) and 3 other cell types or tissues"/>
</dbReference>
<dbReference type="ExpressionAtlas" id="G5EDK5">
    <property type="expression patterns" value="baseline and differential"/>
</dbReference>
<dbReference type="GO" id="GO:0030424">
    <property type="term" value="C:axon"/>
    <property type="evidence" value="ECO:0000314"/>
    <property type="project" value="WormBase"/>
</dbReference>
<dbReference type="GO" id="GO:0030425">
    <property type="term" value="C:dendrite"/>
    <property type="evidence" value="ECO:0007669"/>
    <property type="project" value="UniProtKB-SubCell"/>
</dbReference>
<dbReference type="GO" id="GO:0005886">
    <property type="term" value="C:plasma membrane"/>
    <property type="evidence" value="ECO:0007669"/>
    <property type="project" value="UniProtKB-SubCell"/>
</dbReference>
<dbReference type="GO" id="GO:0005509">
    <property type="term" value="F:calcium ion binding"/>
    <property type="evidence" value="ECO:0007669"/>
    <property type="project" value="InterPro"/>
</dbReference>
<dbReference type="GO" id="GO:0004930">
    <property type="term" value="F:G protein-coupled receptor activity"/>
    <property type="evidence" value="ECO:0007669"/>
    <property type="project" value="InterPro"/>
</dbReference>
<dbReference type="GO" id="GO:0033564">
    <property type="term" value="P:anterior/posterior axon guidance"/>
    <property type="evidence" value="ECO:0000315"/>
    <property type="project" value="WormBase"/>
</dbReference>
<dbReference type="GO" id="GO:0098609">
    <property type="term" value="P:cell-cell adhesion"/>
    <property type="evidence" value="ECO:0000318"/>
    <property type="project" value="GO_Central"/>
</dbReference>
<dbReference type="GO" id="GO:0007156">
    <property type="term" value="P:homophilic cell adhesion via plasma membrane adhesion molecules"/>
    <property type="evidence" value="ECO:0007669"/>
    <property type="project" value="InterPro"/>
</dbReference>
<dbReference type="GO" id="GO:0097376">
    <property type="term" value="P:interneuron axon guidance"/>
    <property type="evidence" value="ECO:0000315"/>
    <property type="project" value="UniProtKB"/>
</dbReference>
<dbReference type="CDD" id="cd11304">
    <property type="entry name" value="Cadherin_repeat"/>
    <property type="match status" value="7"/>
</dbReference>
<dbReference type="CDD" id="cd00054">
    <property type="entry name" value="EGF_CA"/>
    <property type="match status" value="2"/>
</dbReference>
<dbReference type="CDD" id="cd00055">
    <property type="entry name" value="EGF_Lam"/>
    <property type="match status" value="1"/>
</dbReference>
<dbReference type="CDD" id="cd00110">
    <property type="entry name" value="LamG"/>
    <property type="match status" value="2"/>
</dbReference>
<dbReference type="FunFam" id="2.60.40.60:FF:000104">
    <property type="entry name" value="cadherin-23 isoform X1"/>
    <property type="match status" value="1"/>
</dbReference>
<dbReference type="FunFam" id="2.60.40.60:FF:000135">
    <property type="entry name" value="cadherin-23 isoform X1"/>
    <property type="match status" value="1"/>
</dbReference>
<dbReference type="FunFam" id="2.60.40.60:FF:000020">
    <property type="entry name" value="Dachsous cadherin-related 1b"/>
    <property type="match status" value="1"/>
</dbReference>
<dbReference type="FunFam" id="2.60.40.60:FF:000080">
    <property type="entry name" value="FAT atypical cadherin 1"/>
    <property type="match status" value="1"/>
</dbReference>
<dbReference type="FunFam" id="1.20.1070.10:FF:000456">
    <property type="entry name" value="FlaMIngo (Cadherin plus 7TM domain) homolog"/>
    <property type="match status" value="1"/>
</dbReference>
<dbReference type="FunFam" id="2.10.25.10:FF:000949">
    <property type="entry name" value="FlaMIngo (Cadherin plus 7TM domain) homolog"/>
    <property type="match status" value="1"/>
</dbReference>
<dbReference type="FunFam" id="2.60.40.60:FF:000324">
    <property type="entry name" value="FlaMIngo (Cadherin plus 7TM domain) homolog"/>
    <property type="match status" value="1"/>
</dbReference>
<dbReference type="FunFam" id="2.60.40.60:FF:000362">
    <property type="entry name" value="FlaMIngo (Cadherin plus 7TM domain) homolog"/>
    <property type="match status" value="1"/>
</dbReference>
<dbReference type="FunFam" id="2.60.40.60:FF:000421">
    <property type="entry name" value="Protein CBG29115"/>
    <property type="match status" value="1"/>
</dbReference>
<dbReference type="Gene3D" id="2.60.120.200">
    <property type="match status" value="2"/>
</dbReference>
<dbReference type="Gene3D" id="2.60.40.60">
    <property type="entry name" value="Cadherins"/>
    <property type="match status" value="8"/>
</dbReference>
<dbReference type="Gene3D" id="4.10.1240.10">
    <property type="entry name" value="GPCR, family 2, extracellular hormone receptor domain"/>
    <property type="match status" value="1"/>
</dbReference>
<dbReference type="Gene3D" id="2.10.25.10">
    <property type="entry name" value="Laminin"/>
    <property type="match status" value="1"/>
</dbReference>
<dbReference type="Gene3D" id="1.20.1070.10">
    <property type="entry name" value="Rhodopsin 7-helix transmembrane proteins"/>
    <property type="match status" value="1"/>
</dbReference>
<dbReference type="InterPro" id="IPR002126">
    <property type="entry name" value="Cadherin-like_dom"/>
</dbReference>
<dbReference type="InterPro" id="IPR015919">
    <property type="entry name" value="Cadherin-like_sf"/>
</dbReference>
<dbReference type="InterPro" id="IPR056286">
    <property type="entry name" value="Cadherin_CELSR1-3_9th"/>
</dbReference>
<dbReference type="InterPro" id="IPR020894">
    <property type="entry name" value="Cadherin_CS"/>
</dbReference>
<dbReference type="InterPro" id="IPR013320">
    <property type="entry name" value="ConA-like_dom_sf"/>
</dbReference>
<dbReference type="InterPro" id="IPR001881">
    <property type="entry name" value="EGF-like_Ca-bd_dom"/>
</dbReference>
<dbReference type="InterPro" id="IPR000742">
    <property type="entry name" value="EGF-like_dom"/>
</dbReference>
<dbReference type="InterPro" id="IPR055928">
    <property type="entry name" value="Fmi-1_DUF7505"/>
</dbReference>
<dbReference type="InterPro" id="IPR057244">
    <property type="entry name" value="GAIN_B"/>
</dbReference>
<dbReference type="InterPro" id="IPR036445">
    <property type="entry name" value="GPCR_2_extracell_dom_sf"/>
</dbReference>
<dbReference type="InterPro" id="IPR001879">
    <property type="entry name" value="GPCR_2_extracellular_dom"/>
</dbReference>
<dbReference type="InterPro" id="IPR000832">
    <property type="entry name" value="GPCR_2_secretin-like"/>
</dbReference>
<dbReference type="InterPro" id="IPR000203">
    <property type="entry name" value="GPS"/>
</dbReference>
<dbReference type="InterPro" id="IPR001791">
    <property type="entry name" value="Laminin_G"/>
</dbReference>
<dbReference type="InterPro" id="IPR002049">
    <property type="entry name" value="LE_dom"/>
</dbReference>
<dbReference type="PANTHER" id="PTHR24026">
    <property type="entry name" value="FAT ATYPICAL CADHERIN-RELATED"/>
    <property type="match status" value="1"/>
</dbReference>
<dbReference type="PANTHER" id="PTHR24026:SF51">
    <property type="entry name" value="PROTOCADHERIN-LIKE WING POLARITY PROTEIN STAN"/>
    <property type="match status" value="1"/>
</dbReference>
<dbReference type="Pfam" id="PF00002">
    <property type="entry name" value="7tm_2"/>
    <property type="match status" value="1"/>
</dbReference>
<dbReference type="Pfam" id="PF00028">
    <property type="entry name" value="Cadherin"/>
    <property type="match status" value="8"/>
</dbReference>
<dbReference type="Pfam" id="PF23592">
    <property type="entry name" value="Cadherin_CELSR2_9th"/>
    <property type="match status" value="1"/>
</dbReference>
<dbReference type="Pfam" id="PF24337">
    <property type="entry name" value="DUF7505"/>
    <property type="match status" value="1"/>
</dbReference>
<dbReference type="Pfam" id="PF00008">
    <property type="entry name" value="EGF"/>
    <property type="match status" value="1"/>
</dbReference>
<dbReference type="Pfam" id="PF02210">
    <property type="entry name" value="Laminin_G_2"/>
    <property type="match status" value="1"/>
</dbReference>
<dbReference type="PRINTS" id="PR00205">
    <property type="entry name" value="CADHERIN"/>
</dbReference>
<dbReference type="SMART" id="SM00112">
    <property type="entry name" value="CA"/>
    <property type="match status" value="8"/>
</dbReference>
<dbReference type="SMART" id="SM00181">
    <property type="entry name" value="EGF"/>
    <property type="match status" value="5"/>
</dbReference>
<dbReference type="SMART" id="SM00179">
    <property type="entry name" value="EGF_CA"/>
    <property type="match status" value="3"/>
</dbReference>
<dbReference type="SMART" id="SM00303">
    <property type="entry name" value="GPS"/>
    <property type="match status" value="1"/>
</dbReference>
<dbReference type="SMART" id="SM00008">
    <property type="entry name" value="HormR"/>
    <property type="match status" value="1"/>
</dbReference>
<dbReference type="SMART" id="SM00282">
    <property type="entry name" value="LamG"/>
    <property type="match status" value="2"/>
</dbReference>
<dbReference type="SUPFAM" id="SSF49313">
    <property type="entry name" value="Cadherin-like"/>
    <property type="match status" value="9"/>
</dbReference>
<dbReference type="SUPFAM" id="SSF49899">
    <property type="entry name" value="Concanavalin A-like lectins/glucanases"/>
    <property type="match status" value="2"/>
</dbReference>
<dbReference type="SUPFAM" id="SSF111418">
    <property type="entry name" value="Hormone receptor domain"/>
    <property type="match status" value="1"/>
</dbReference>
<dbReference type="PROSITE" id="PS00232">
    <property type="entry name" value="CADHERIN_1"/>
    <property type="match status" value="6"/>
</dbReference>
<dbReference type="PROSITE" id="PS50268">
    <property type="entry name" value="CADHERIN_2"/>
    <property type="match status" value="8"/>
</dbReference>
<dbReference type="PROSITE" id="PS00022">
    <property type="entry name" value="EGF_1"/>
    <property type="match status" value="4"/>
</dbReference>
<dbReference type="PROSITE" id="PS01186">
    <property type="entry name" value="EGF_2"/>
    <property type="match status" value="2"/>
</dbReference>
<dbReference type="PROSITE" id="PS50026">
    <property type="entry name" value="EGF_3"/>
    <property type="match status" value="4"/>
</dbReference>
<dbReference type="PROSITE" id="PS50227">
    <property type="entry name" value="G_PROTEIN_RECEP_F2_3"/>
    <property type="match status" value="1"/>
</dbReference>
<dbReference type="PROSITE" id="PS50221">
    <property type="entry name" value="GAIN_B"/>
    <property type="match status" value="1"/>
</dbReference>
<dbReference type="PROSITE" id="PS50025">
    <property type="entry name" value="LAM_G_DOMAIN"/>
    <property type="match status" value="2"/>
</dbReference>